<keyword id="KW-0963">Cytoplasm</keyword>
<keyword id="KW-0489">Methyltransferase</keyword>
<keyword id="KW-1185">Reference proteome</keyword>
<keyword id="KW-0949">S-adenosyl-L-methionine</keyword>
<keyword id="KW-0808">Transferase</keyword>
<reference key="1">
    <citation type="journal article" date="2008" name="Genome Biol.">
        <title>The complete genome, comparative and functional analysis of Stenotrophomonas maltophilia reveals an organism heavily shielded by drug resistance determinants.</title>
        <authorList>
            <person name="Crossman L.C."/>
            <person name="Gould V.C."/>
            <person name="Dow J.M."/>
            <person name="Vernikos G.S."/>
            <person name="Okazaki A."/>
            <person name="Sebaihia M."/>
            <person name="Saunders D."/>
            <person name="Arrowsmith C."/>
            <person name="Carver T."/>
            <person name="Peters N."/>
            <person name="Adlem E."/>
            <person name="Kerhornou A."/>
            <person name="Lord A."/>
            <person name="Murphy L."/>
            <person name="Seeger K."/>
            <person name="Squares R."/>
            <person name="Rutter S."/>
            <person name="Quail M.A."/>
            <person name="Rajandream M.A."/>
            <person name="Harris D."/>
            <person name="Churcher C."/>
            <person name="Bentley S.D."/>
            <person name="Parkhill J."/>
            <person name="Thomson N.R."/>
            <person name="Avison M.B."/>
        </authorList>
    </citation>
    <scope>NUCLEOTIDE SEQUENCE [LARGE SCALE GENOMIC DNA]</scope>
    <source>
        <strain>K279a</strain>
    </source>
</reference>
<feature type="chain" id="PRO_0000351941" description="Protein-L-isoaspartate O-methyltransferase">
    <location>
        <begin position="1"/>
        <end position="225"/>
    </location>
</feature>
<feature type="active site" evidence="1">
    <location>
        <position position="75"/>
    </location>
</feature>
<evidence type="ECO:0000255" key="1">
    <source>
        <dbReference type="HAMAP-Rule" id="MF_00090"/>
    </source>
</evidence>
<sequence>MSPRLRLQPEAVGIGMTSQRVRDRLVDRLREAGIVDESTLNAIRVVPRHLFIDEALASRAYEDTALPIGHGQTISQPWVVARMTEAVLQVSPKKVLEVGTGSGYQAAVLGALGLEIYTVERIGDLLRQARKRFRALGMNIRTKHDDGRAGWAEHGPFDAIVVTAAAPALVDELVGQLAEGGRLVAPVGGPGGQSLVQLDRRADGSIEQRVLAPVTFVPLLSGMLD</sequence>
<protein>
    <recommendedName>
        <fullName evidence="1">Protein-L-isoaspartate O-methyltransferase</fullName>
        <ecNumber evidence="1">2.1.1.77</ecNumber>
    </recommendedName>
    <alternativeName>
        <fullName evidence="1">L-isoaspartyl protein carboxyl methyltransferase</fullName>
    </alternativeName>
    <alternativeName>
        <fullName evidence="1">Protein L-isoaspartyl methyltransferase</fullName>
    </alternativeName>
    <alternativeName>
        <fullName evidence="1">Protein-beta-aspartate methyltransferase</fullName>
        <shortName evidence="1">PIMT</shortName>
    </alternativeName>
</protein>
<accession>B2FK95</accession>
<gene>
    <name evidence="1" type="primary">pcm</name>
    <name type="ordered locus">Smlt1722</name>
</gene>
<organism>
    <name type="scientific">Stenotrophomonas maltophilia (strain K279a)</name>
    <dbReference type="NCBI Taxonomy" id="522373"/>
    <lineage>
        <taxon>Bacteria</taxon>
        <taxon>Pseudomonadati</taxon>
        <taxon>Pseudomonadota</taxon>
        <taxon>Gammaproteobacteria</taxon>
        <taxon>Lysobacterales</taxon>
        <taxon>Lysobacteraceae</taxon>
        <taxon>Stenotrophomonas</taxon>
        <taxon>Stenotrophomonas maltophilia group</taxon>
    </lineage>
</organism>
<dbReference type="EC" id="2.1.1.77" evidence="1"/>
<dbReference type="EMBL" id="AM743169">
    <property type="protein sequence ID" value="CAQ45246.1"/>
    <property type="molecule type" value="Genomic_DNA"/>
</dbReference>
<dbReference type="RefSeq" id="WP_005409009.1">
    <property type="nucleotide sequence ID" value="NC_010943.1"/>
</dbReference>
<dbReference type="SMR" id="B2FK95"/>
<dbReference type="EnsemblBacteria" id="CAQ45246">
    <property type="protein sequence ID" value="CAQ45246"/>
    <property type="gene ID" value="Smlt1722"/>
</dbReference>
<dbReference type="KEGG" id="sml:Smlt1722"/>
<dbReference type="eggNOG" id="COG2518">
    <property type="taxonomic scope" value="Bacteria"/>
</dbReference>
<dbReference type="HOGENOM" id="CLU_055432_2_0_6"/>
<dbReference type="Proteomes" id="UP000008840">
    <property type="component" value="Chromosome"/>
</dbReference>
<dbReference type="GO" id="GO:0005737">
    <property type="term" value="C:cytoplasm"/>
    <property type="evidence" value="ECO:0007669"/>
    <property type="project" value="UniProtKB-SubCell"/>
</dbReference>
<dbReference type="GO" id="GO:0004719">
    <property type="term" value="F:protein-L-isoaspartate (D-aspartate) O-methyltransferase activity"/>
    <property type="evidence" value="ECO:0007669"/>
    <property type="project" value="UniProtKB-UniRule"/>
</dbReference>
<dbReference type="GO" id="GO:0032259">
    <property type="term" value="P:methylation"/>
    <property type="evidence" value="ECO:0007669"/>
    <property type="project" value="UniProtKB-KW"/>
</dbReference>
<dbReference type="GO" id="GO:0036211">
    <property type="term" value="P:protein modification process"/>
    <property type="evidence" value="ECO:0007669"/>
    <property type="project" value="UniProtKB-UniRule"/>
</dbReference>
<dbReference type="GO" id="GO:0030091">
    <property type="term" value="P:protein repair"/>
    <property type="evidence" value="ECO:0007669"/>
    <property type="project" value="UniProtKB-UniRule"/>
</dbReference>
<dbReference type="CDD" id="cd02440">
    <property type="entry name" value="AdoMet_MTases"/>
    <property type="match status" value="1"/>
</dbReference>
<dbReference type="FunFam" id="3.40.50.150:FF:000010">
    <property type="entry name" value="Protein-L-isoaspartate O-methyltransferase"/>
    <property type="match status" value="1"/>
</dbReference>
<dbReference type="Gene3D" id="3.40.50.150">
    <property type="entry name" value="Vaccinia Virus protein VP39"/>
    <property type="match status" value="1"/>
</dbReference>
<dbReference type="HAMAP" id="MF_00090">
    <property type="entry name" value="PIMT"/>
    <property type="match status" value="1"/>
</dbReference>
<dbReference type="InterPro" id="IPR000682">
    <property type="entry name" value="PCMT"/>
</dbReference>
<dbReference type="InterPro" id="IPR029063">
    <property type="entry name" value="SAM-dependent_MTases_sf"/>
</dbReference>
<dbReference type="NCBIfam" id="TIGR00080">
    <property type="entry name" value="pimt"/>
    <property type="match status" value="1"/>
</dbReference>
<dbReference type="NCBIfam" id="NF001453">
    <property type="entry name" value="PRK00312.1"/>
    <property type="match status" value="1"/>
</dbReference>
<dbReference type="PANTHER" id="PTHR11579">
    <property type="entry name" value="PROTEIN-L-ISOASPARTATE O-METHYLTRANSFERASE"/>
    <property type="match status" value="1"/>
</dbReference>
<dbReference type="PANTHER" id="PTHR11579:SF0">
    <property type="entry name" value="PROTEIN-L-ISOASPARTATE(D-ASPARTATE) O-METHYLTRANSFERASE"/>
    <property type="match status" value="1"/>
</dbReference>
<dbReference type="Pfam" id="PF01135">
    <property type="entry name" value="PCMT"/>
    <property type="match status" value="1"/>
</dbReference>
<dbReference type="SUPFAM" id="SSF53335">
    <property type="entry name" value="S-adenosyl-L-methionine-dependent methyltransferases"/>
    <property type="match status" value="1"/>
</dbReference>
<dbReference type="PROSITE" id="PS01279">
    <property type="entry name" value="PCMT"/>
    <property type="match status" value="1"/>
</dbReference>
<proteinExistence type="inferred from homology"/>
<name>PIMT_STRMK</name>
<comment type="function">
    <text evidence="1">Catalyzes the methyl esterification of L-isoaspartyl residues in peptides and proteins that result from spontaneous decomposition of normal L-aspartyl and L-asparaginyl residues. It plays a role in the repair and/or degradation of damaged proteins.</text>
</comment>
<comment type="catalytic activity">
    <reaction evidence="1">
        <text>[protein]-L-isoaspartate + S-adenosyl-L-methionine = [protein]-L-isoaspartate alpha-methyl ester + S-adenosyl-L-homocysteine</text>
        <dbReference type="Rhea" id="RHEA:12705"/>
        <dbReference type="Rhea" id="RHEA-COMP:12143"/>
        <dbReference type="Rhea" id="RHEA-COMP:12144"/>
        <dbReference type="ChEBI" id="CHEBI:57856"/>
        <dbReference type="ChEBI" id="CHEBI:59789"/>
        <dbReference type="ChEBI" id="CHEBI:90596"/>
        <dbReference type="ChEBI" id="CHEBI:90598"/>
        <dbReference type="EC" id="2.1.1.77"/>
    </reaction>
</comment>
<comment type="subcellular location">
    <subcellularLocation>
        <location evidence="1">Cytoplasm</location>
    </subcellularLocation>
</comment>
<comment type="similarity">
    <text evidence="1">Belongs to the methyltransferase superfamily. L-isoaspartyl/D-aspartyl protein methyltransferase family.</text>
</comment>